<evidence type="ECO:0000250" key="1">
    <source>
        <dbReference type="UniProtKB" id="A0A0H3GDH9"/>
    </source>
</evidence>
<evidence type="ECO:0000250" key="2">
    <source>
        <dbReference type="UniProtKB" id="A0A3Q0NBH7"/>
    </source>
</evidence>
<evidence type="ECO:0000250" key="3">
    <source>
        <dbReference type="UniProtKB" id="Q8DP63"/>
    </source>
</evidence>
<evidence type="ECO:0000255" key="4"/>
<evidence type="ECO:0000255" key="5">
    <source>
        <dbReference type="PIRSR" id="PIRSR037479-1"/>
    </source>
</evidence>
<evidence type="ECO:0000255" key="6">
    <source>
        <dbReference type="PIRSR" id="PIRSR037479-2"/>
    </source>
</evidence>
<evidence type="ECO:0000255" key="7">
    <source>
        <dbReference type="PIRSR" id="PIRSR037479-3"/>
    </source>
</evidence>
<evidence type="ECO:0000255" key="8">
    <source>
        <dbReference type="PIRSR" id="PIRSR037479-4"/>
    </source>
</evidence>
<evidence type="ECO:0000255" key="9">
    <source>
        <dbReference type="PROSITE-ProRule" id="PRU01014"/>
    </source>
</evidence>
<evidence type="ECO:0000269" key="10">
    <source>
    </source>
</evidence>
<evidence type="ECO:0000269" key="11">
    <source>
    </source>
</evidence>
<evidence type="ECO:0000269" key="12">
    <source>
    </source>
</evidence>
<evidence type="ECO:0000303" key="13">
    <source>
    </source>
</evidence>
<evidence type="ECO:0000303" key="14">
    <source>
    </source>
</evidence>
<evidence type="ECO:0000303" key="15">
    <source>
    </source>
</evidence>
<evidence type="ECO:0000305" key="16"/>
<evidence type="ECO:0000305" key="17">
    <source>
    </source>
</evidence>
<evidence type="ECO:0000312" key="18">
    <source>
        <dbReference type="EMBL" id="CAC98494.1"/>
    </source>
</evidence>
<name>PGDA_LISMO</name>
<sequence length="466" mass="52496">MKIRWIRLSLVAILIIAVVFIGVIGFQKYQFSKSRNKVIMQMDRLMKDQDGGNFRRLDKKENGVEIISYIPKTTEKKDNEIIQKEIGKATDAEVKKLNRDKETQGIIFYTYQKHRMAEQAISYKAVQSEYVKEGRTKFVLKDKKDICKNIVTDAETGALLTLGEVLIKSNQTKLNLKTAVEEELIKTGDFSLKDVGNLGKIKSLVKWNQTDFEITNSEIILPVKIPGAPEPKKVKVKLADIASSVNKRYLPSSVKVPEVPKAKTNKRIALTFDDGPSSSVTPGVLDTLKRHNVKATFFVLGSSVIQNPGLVKRELEEGHQVGSHSWDHPQLTKQSTQEVYNQILKTQKAVFDQTGYFPTTMRPPYGAVNKQVAEEIGLPIIQWSVDTEDWKYRNAGIVTKKVLAGATDGAIVLMHDIHKTTAASLDTTLTKLKSQGYEFVTIDELYGEKLQIGKQYFDKTDSRMVK</sequence>
<comment type="function">
    <text evidence="1 2 10 11">Catalyzes the deacetylation of N-acetylglucosamine (GlcNAc) residues in peptidoglycan (PG) (By similarity). Also deacetylates N-acetylated PG (PubMed:17215377). Does not deacetylate N-acetylmuramic acid (By similarity). Confers host lysozyme resistance (PubMed:17215377, PubMed:29215169). Critical for virulence and escape from innate immune response of the host. Required for intracellular survival of bacteria in macrophages of the host (PubMed:17215377). Required for successful host colonization (PubMed:17215377, PubMed:21844299). Controls the production of inflammatory mediators in the bone marrow derived macrophages (BMMs) of the infected mouse (By similarity). Suppresses Toll-like receptor 2 (TLR2)-dependent secretion of interleukin 6 (IL-6) and interferon-beta (IFN-beta) in the macrophages of the infected mouse. May decrease accessibility of pattern recognition receptors (PRRs) such as nucleotide-binding oligomerization domain protein (NOD) 1 of the host to the bacterial cell wall components (PubMed:17215377). Protects cells from autolysis induced by lysozyme or by other autolysis-inducing agents (By similarity).</text>
</comment>
<comment type="catalytic activity">
    <reaction evidence="2">
        <text>peptidoglycan-N-acetyl-D-glucosamine + H2O = peptidoglycan-D-glucosamine + acetate.</text>
        <dbReference type="EC" id="3.5.1.104"/>
    </reaction>
</comment>
<comment type="cofactor">
    <cofactor evidence="3">
        <name>Zn(2+)</name>
        <dbReference type="ChEBI" id="CHEBI:29105"/>
    </cofactor>
</comment>
<comment type="subunit">
    <text evidence="12">Homodimer. Interacts (via transmembrane domain) with PbpA1 (via transmembrane domain); the interaction is important for the peptidoglycan N-deacetylase function of this protein.</text>
</comment>
<comment type="subcellular location">
    <subcellularLocation>
        <location evidence="17">Cell membrane</location>
        <topology evidence="4 17">Single-pass membrane protein</topology>
        <orientation evidence="17">Extracellular side</orientation>
    </subcellularLocation>
    <subcellularLocation>
        <location evidence="2">Secreted</location>
        <location evidence="2">Cell wall</location>
    </subcellularLocation>
</comment>
<comment type="induction">
    <text evidence="1">Transcriptionally up-regulated by response regulator DegU and abundant non-coding RNA encoded by rli31.</text>
</comment>
<comment type="disruption phenotype">
    <text evidence="10 11 12">Cells lacking this gene completely lack the N-deacetylated muropeptides characteristic of the wild-type. Extremely sensitive to lysozyme in stationary phase as shown by five-log decrease in viability compared with the wild-type. Not sensitive to human serum amidase. Impaired survival and multiplication in Listeria-infected murine macrophage-like (RAW264.7) cells, mouse peritoneal-elicited macrophages (PEM) and bone marrow-derived macrophages (BMDM). Impaired escape from phagosomes of macrophages and rapidly killed within macrophage vacuoles of the infected mouse. Impaired in surviving at early stages of infection in intestinal lumen, intestine and mesenteric lymph nodes of orally infected human E-cadherin transgenic mice, which are permissive to Listeria oral infection. Severely attenuated in virulence at later stages of infection in intravenously infected mouse shown by lower bacterial counts compared to wild-type in both liver and spleen of the infected mouse. Induces interleukin 6 (IL-6) and a massive IFN-beta production in RAW264.7 and PEM cells of the infected mouse in a manner that is dependent on Toll-like receptor 2 (TLR2) and also affected by nucleotide-binding oligomerization domain protein (NOD) 1 (PubMed:17215377). Not detected in bloodstream, and strongly impaired colonization in liver and spleen of mouse injected intravenously by Listeria compared to wild-type. Secretion of cytokines interleukin 2 (IL-2), IL-6, IL-12 and IL-5, chemokines CCL2 and CXCL9, or CCL3 (macrophage inflammatory protein-1alpha) by the liver cells of the infected mouse is similar to wild-type. The virulence of a double oatA/pgdA deletion mutant is more reduced than that of either single mutant as detected by lack of colonization in the bloodstream, liver and spleen of infected mouse 24 hours postinfection (PubMed:21844299). Massive reduction of resistance against lysozyme compared to wild-type. Most mutant cells are lysed within the first 30 minutes of lysozyme exposure (PubMed:29215169).</text>
</comment>
<reference key="1">
    <citation type="journal article" date="2001" name="Science">
        <title>Comparative genomics of Listeria species.</title>
        <authorList>
            <person name="Glaser P."/>
            <person name="Frangeul L."/>
            <person name="Buchrieser C."/>
            <person name="Rusniok C."/>
            <person name="Amend A."/>
            <person name="Baquero F."/>
            <person name="Berche P."/>
            <person name="Bloecker H."/>
            <person name="Brandt P."/>
            <person name="Chakraborty T."/>
            <person name="Charbit A."/>
            <person name="Chetouani F."/>
            <person name="Couve E."/>
            <person name="de Daruvar A."/>
            <person name="Dehoux P."/>
            <person name="Domann E."/>
            <person name="Dominguez-Bernal G."/>
            <person name="Duchaud E."/>
            <person name="Durant L."/>
            <person name="Dussurget O."/>
            <person name="Entian K.-D."/>
            <person name="Fsihi H."/>
            <person name="Garcia-del Portillo F."/>
            <person name="Garrido P."/>
            <person name="Gautier L."/>
            <person name="Goebel W."/>
            <person name="Gomez-Lopez N."/>
            <person name="Hain T."/>
            <person name="Hauf J."/>
            <person name="Jackson D."/>
            <person name="Jones L.-M."/>
            <person name="Kaerst U."/>
            <person name="Kreft J."/>
            <person name="Kuhn M."/>
            <person name="Kunst F."/>
            <person name="Kurapkat G."/>
            <person name="Madueno E."/>
            <person name="Maitournam A."/>
            <person name="Mata Vicente J."/>
            <person name="Ng E."/>
            <person name="Nedjari H."/>
            <person name="Nordsiek G."/>
            <person name="Novella S."/>
            <person name="de Pablos B."/>
            <person name="Perez-Diaz J.-C."/>
            <person name="Purcell R."/>
            <person name="Remmel B."/>
            <person name="Rose M."/>
            <person name="Schlueter T."/>
            <person name="Simoes N."/>
            <person name="Tierrez A."/>
            <person name="Vazquez-Boland J.-A."/>
            <person name="Voss H."/>
            <person name="Wehland J."/>
            <person name="Cossart P."/>
        </authorList>
    </citation>
    <scope>NUCLEOTIDE SEQUENCE [LARGE SCALE GENOMIC DNA]</scope>
    <source>
        <strain>ATCC BAA-679 / EGD-e</strain>
    </source>
</reference>
<reference key="2">
    <citation type="journal article" date="2007" name="Proc. Natl. Acad. Sci. U.S.A.">
        <title>A critical role for peptidoglycan N-deacetylation in Listeria evasion from the host innate immune system.</title>
        <authorList>
            <person name="Boneca I.G."/>
            <person name="Dussurget O."/>
            <person name="Cabanes D."/>
            <person name="Nahori M.A."/>
            <person name="Sousa S."/>
            <person name="Lecuit M."/>
            <person name="Psylinakis E."/>
            <person name="Bouriotis V."/>
            <person name="Hugot J.P."/>
            <person name="Giovannini M."/>
            <person name="Coyle A."/>
            <person name="Bertin J."/>
            <person name="Namane A."/>
            <person name="Rousselle J.C."/>
            <person name="Cayet N."/>
            <person name="Prevost M.C."/>
            <person name="Balloy V."/>
            <person name="Chignard M."/>
            <person name="Philpott D.J."/>
            <person name="Cossart P."/>
            <person name="Girardin S.E."/>
        </authorList>
    </citation>
    <scope>FUNCTION</scope>
    <scope>DISRUPTION PHENOTYPE</scope>
    <source>
        <strain evidence="13">ATCC BAA-679 / EGD-e</strain>
    </source>
</reference>
<reference key="3">
    <citation type="journal article" date="2011" name="J. Infect. Dis.">
        <title>OatA, a peptidoglycan O-acetyltransferase involved in Listeria monocytogenes immune escape, is critical for virulence.</title>
        <authorList>
            <person name="Aubry C."/>
            <person name="Goulard C."/>
            <person name="Nahori M.A."/>
            <person name="Cayet N."/>
            <person name="Decalf J."/>
            <person name="Sachse M."/>
            <person name="Boneca I.G."/>
            <person name="Cossart P."/>
            <person name="Dussurget O."/>
        </authorList>
    </citation>
    <scope>FUNCTION</scope>
    <scope>DISRUPTION PHENOTYPE</scope>
    <source>
        <strain evidence="14">ATCC BAA-679 / EGD-e</strain>
    </source>
</reference>
<reference key="4">
    <citation type="journal article" date="2018" name="Mol. Microbiol.">
        <title>Stimulation of PgdA-dependent peptidoglycan N-deacetylation by GpsB-PBP A1 in Listeria monocytogenes.</title>
        <authorList>
            <person name="Rismondo J."/>
            <person name="Wamp S."/>
            <person name="Aldridge C."/>
            <person name="Vollmer W."/>
            <person name="Halbedel S."/>
        </authorList>
    </citation>
    <scope>SUBUNIT</scope>
    <scope>INTERACTION WITH PBPA1</scope>
    <scope>SUBCELLULAR LOCATION</scope>
    <scope>DISRUPTION PHENOTYPE</scope>
    <scope>MUTAGENESIS OF TRP-5; ARG-7; LEU-8; ILE-15; VAL-19 AND 29-TYR--LYS-466</scope>
    <source>
        <strain evidence="15">ATCC BAA-679 / EGD-e</strain>
    </source>
</reference>
<proteinExistence type="evidence at protein level"/>
<keyword id="KW-1003">Cell membrane</keyword>
<keyword id="KW-0134">Cell wall</keyword>
<keyword id="KW-0378">Hydrolase</keyword>
<keyword id="KW-0472">Membrane</keyword>
<keyword id="KW-0479">Metal-binding</keyword>
<keyword id="KW-1185">Reference proteome</keyword>
<keyword id="KW-0964">Secreted</keyword>
<keyword id="KW-0812">Transmembrane</keyword>
<keyword id="KW-1133">Transmembrane helix</keyword>
<keyword id="KW-0843">Virulence</keyword>
<keyword id="KW-0862">Zinc</keyword>
<gene>
    <name evidence="13 14 15" type="primary">pgdA</name>
    <name evidence="13 18" type="ordered locus">lmo0415</name>
</gene>
<feature type="chain" id="PRO_0000452093" description="Peptidoglycan-N-acetylglucosamine deacetylase PgdA">
    <location>
        <begin position="1"/>
        <end position="466"/>
    </location>
</feature>
<feature type="topological domain" description="Cytoplasmic" evidence="17">
    <location>
        <begin position="1"/>
        <end position="5"/>
    </location>
</feature>
<feature type="transmembrane region" description="Helical" evidence="4">
    <location>
        <begin position="6"/>
        <end position="26"/>
    </location>
</feature>
<feature type="topological domain" description="Extracellular" evidence="17">
    <location>
        <begin position="27"/>
        <end position="466"/>
    </location>
</feature>
<feature type="domain" description="NodB homology" evidence="9">
    <location>
        <begin position="266"/>
        <end position="440"/>
    </location>
</feature>
<feature type="active site" description="Proton acceptor" evidence="5 9">
    <location>
        <position position="273"/>
    </location>
</feature>
<feature type="active site" description="Proton donor" evidence="5 9">
    <location>
        <position position="415"/>
    </location>
</feature>
<feature type="binding site" evidence="7">
    <location>
        <position position="274"/>
    </location>
    <ligand>
        <name>Zn(2+)</name>
        <dbReference type="ChEBI" id="CHEBI:29105"/>
    </ligand>
</feature>
<feature type="binding site" evidence="7">
    <location>
        <position position="324"/>
    </location>
    <ligand>
        <name>Zn(2+)</name>
        <dbReference type="ChEBI" id="CHEBI:29105"/>
    </ligand>
</feature>
<feature type="binding site" evidence="7">
    <location>
        <position position="328"/>
    </location>
    <ligand>
        <name>Zn(2+)</name>
        <dbReference type="ChEBI" id="CHEBI:29105"/>
    </ligand>
</feature>
<feature type="binding site" evidence="6">
    <location>
        <position position="365"/>
    </location>
    <ligand>
        <name>substrate</name>
    </ligand>
</feature>
<feature type="site" description="Raises pKa of active site His" evidence="8">
    <location>
        <position position="389"/>
    </location>
</feature>
<feature type="mutagenesis site" description="Loss of homodimerization, but interacts with full-length PbpA1; when associated with 29-Y--K-466. Reduced resistance against lysozyme." evidence="12">
    <original>W</original>
    <variation>A</variation>
    <location>
        <position position="5"/>
    </location>
</feature>
<feature type="mutagenesis site" description="Loss of interaction with full-length PbpA1, but homodimerizes; when associated with 29-Y--K-466. Reduced resistance against lysozyme." evidence="12">
    <original>R</original>
    <variation>A</variation>
    <location>
        <position position="7"/>
    </location>
</feature>
<feature type="mutagenesis site" description="Loss of homodimerization, but interacts with full-length PbpA1; when associated with 29-Y--K-466. Reduced resistance against lysozyme." evidence="12">
    <original>L</original>
    <variation>A</variation>
    <location>
        <position position="8"/>
    </location>
</feature>
<feature type="mutagenesis site" description="Loss of interaction with full-length PbpA1, but homodimerizes; when associated with 29-Y--K-466. Reduced resistance against lysozyme." evidence="12">
    <original>I</original>
    <variation>A</variation>
    <location>
        <position position="15"/>
    </location>
</feature>
<feature type="mutagenesis site" description="Loss of interaction with full-length PbpA1, but homodimerizes; when associated with 29-Y--K-466. No effect in resistance against lysozyme." evidence="12">
    <original>V</original>
    <variation>A</variation>
    <location>
        <position position="19"/>
    </location>
</feature>
<feature type="mutagenesis site" description="Interacts with full-length PbpA1 and with truncated PbpA1 consisting of only residues 1-91 of the N-terminus which includes its transmembrane domain." evidence="12">
    <location>
        <begin position="29"/>
        <end position="466"/>
    </location>
</feature>
<dbReference type="EC" id="3.5.1.104" evidence="2"/>
<dbReference type="EMBL" id="AL591975">
    <property type="protein sequence ID" value="CAC98494.1"/>
    <property type="molecule type" value="Genomic_DNA"/>
</dbReference>
<dbReference type="PIR" id="AH1126">
    <property type="entry name" value="AH1126"/>
</dbReference>
<dbReference type="RefSeq" id="NP_463944.1">
    <property type="nucleotide sequence ID" value="NC_003210.1"/>
</dbReference>
<dbReference type="RefSeq" id="WP_003733946.1">
    <property type="nucleotide sequence ID" value="NZ_CP149495.1"/>
</dbReference>
<dbReference type="SMR" id="Q8Y9V5"/>
<dbReference type="STRING" id="169963.gene:17593066"/>
<dbReference type="PaxDb" id="169963-lmo0415"/>
<dbReference type="EnsemblBacteria" id="CAC98494">
    <property type="protein sequence ID" value="CAC98494"/>
    <property type="gene ID" value="CAC98494"/>
</dbReference>
<dbReference type="GeneID" id="987823"/>
<dbReference type="KEGG" id="lmo:lmo0415"/>
<dbReference type="PATRIC" id="fig|169963.11.peg.428"/>
<dbReference type="eggNOG" id="COG0726">
    <property type="taxonomic scope" value="Bacteria"/>
</dbReference>
<dbReference type="HOGENOM" id="CLU_037608_1_1_9"/>
<dbReference type="OrthoDB" id="9812065at2"/>
<dbReference type="PhylomeDB" id="Q8Y9V5"/>
<dbReference type="BioCyc" id="LMON169963:LMO0415-MONOMER"/>
<dbReference type="PHI-base" id="PHI:4689"/>
<dbReference type="Proteomes" id="UP000000817">
    <property type="component" value="Chromosome"/>
</dbReference>
<dbReference type="GO" id="GO:0005576">
    <property type="term" value="C:extracellular region"/>
    <property type="evidence" value="ECO:0000303"/>
    <property type="project" value="UniProtKB"/>
</dbReference>
<dbReference type="GO" id="GO:0009275">
    <property type="term" value="C:Gram-positive-bacterium-type cell wall"/>
    <property type="evidence" value="ECO:0000315"/>
    <property type="project" value="UniProtKB"/>
</dbReference>
<dbReference type="GO" id="GO:0005886">
    <property type="term" value="C:plasma membrane"/>
    <property type="evidence" value="ECO:0000303"/>
    <property type="project" value="UniProtKB"/>
</dbReference>
<dbReference type="GO" id="GO:0060241">
    <property type="term" value="F:lysozyme inhibitor activity"/>
    <property type="evidence" value="ECO:0000315"/>
    <property type="project" value="UniProtKB"/>
</dbReference>
<dbReference type="GO" id="GO:0050119">
    <property type="term" value="F:N-acetylglucosamine deacetylase activity"/>
    <property type="evidence" value="ECO:0000250"/>
    <property type="project" value="UniProtKB"/>
</dbReference>
<dbReference type="GO" id="GO:0042803">
    <property type="term" value="F:protein homodimerization activity"/>
    <property type="evidence" value="ECO:0000315"/>
    <property type="project" value="UniProtKB"/>
</dbReference>
<dbReference type="GO" id="GO:0008270">
    <property type="term" value="F:zinc ion binding"/>
    <property type="evidence" value="ECO:0000250"/>
    <property type="project" value="UniProtKB"/>
</dbReference>
<dbReference type="GO" id="GO:0001896">
    <property type="term" value="P:autolysis"/>
    <property type="evidence" value="ECO:0000250"/>
    <property type="project" value="UniProtKB"/>
</dbReference>
<dbReference type="GO" id="GO:0005975">
    <property type="term" value="P:carbohydrate metabolic process"/>
    <property type="evidence" value="ECO:0007669"/>
    <property type="project" value="InterPro"/>
</dbReference>
<dbReference type="GO" id="GO:0042545">
    <property type="term" value="P:cell wall modification"/>
    <property type="evidence" value="ECO:0000315"/>
    <property type="project" value="UniProtKB"/>
</dbReference>
<dbReference type="GO" id="GO:0141043">
    <property type="term" value="P:symbiont-mediated evasion of host innate immune response"/>
    <property type="evidence" value="ECO:0000315"/>
    <property type="project" value="UniProtKB"/>
</dbReference>
<dbReference type="CDD" id="cd10954">
    <property type="entry name" value="CE4_CtAXE_like"/>
    <property type="match status" value="1"/>
</dbReference>
<dbReference type="Gene3D" id="3.20.20.370">
    <property type="entry name" value="Glycoside hydrolase/deacetylase"/>
    <property type="match status" value="1"/>
</dbReference>
<dbReference type="InterPro" id="IPR011330">
    <property type="entry name" value="Glyco_hydro/deAcase_b/a-brl"/>
</dbReference>
<dbReference type="InterPro" id="IPR002509">
    <property type="entry name" value="NODB_dom"/>
</dbReference>
<dbReference type="InterPro" id="IPR017219">
    <property type="entry name" value="Peptidoglycan_deacetylase"/>
</dbReference>
<dbReference type="InterPro" id="IPR050248">
    <property type="entry name" value="Polysacc_deacetylase_ArnD"/>
</dbReference>
<dbReference type="PANTHER" id="PTHR10587:SF133">
    <property type="entry name" value="CHITIN DEACETYLASE 1-RELATED"/>
    <property type="match status" value="1"/>
</dbReference>
<dbReference type="PANTHER" id="PTHR10587">
    <property type="entry name" value="GLYCOSYL TRANSFERASE-RELATED"/>
    <property type="match status" value="1"/>
</dbReference>
<dbReference type="Pfam" id="PF01522">
    <property type="entry name" value="Polysacc_deac_1"/>
    <property type="match status" value="1"/>
</dbReference>
<dbReference type="PIRSF" id="PIRSF037479">
    <property type="entry name" value="PG_GlcNAc_deacetylase"/>
    <property type="match status" value="1"/>
</dbReference>
<dbReference type="SUPFAM" id="SSF88713">
    <property type="entry name" value="Glycoside hydrolase/deacetylase"/>
    <property type="match status" value="1"/>
</dbReference>
<dbReference type="PROSITE" id="PS51677">
    <property type="entry name" value="NODB"/>
    <property type="match status" value="1"/>
</dbReference>
<protein>
    <recommendedName>
        <fullName evidence="16">Peptidoglycan-N-acetylglucosamine deacetylase PgdA</fullName>
        <shortName evidence="16">Peptidoglycan GlcNAc deacetylase</shortName>
        <ecNumber evidence="2">3.5.1.104</ecNumber>
    </recommendedName>
    <alternativeName>
        <fullName evidence="13">Peptidoglycan N-deacetylase</fullName>
        <shortName evidence="13">PG N-deacetylase</shortName>
    </alternativeName>
    <alternativeName>
        <fullName evidence="13">Petptidoglycan deacetylase</fullName>
        <shortName evidence="13">PG deacetylase</shortName>
    </alternativeName>
</protein>
<organism>
    <name type="scientific">Listeria monocytogenes serovar 1/2a (strain ATCC BAA-679 / EGD-e)</name>
    <dbReference type="NCBI Taxonomy" id="169963"/>
    <lineage>
        <taxon>Bacteria</taxon>
        <taxon>Bacillati</taxon>
        <taxon>Bacillota</taxon>
        <taxon>Bacilli</taxon>
        <taxon>Bacillales</taxon>
        <taxon>Listeriaceae</taxon>
        <taxon>Listeria</taxon>
    </lineage>
</organism>
<accession>Q8Y9V5</accession>